<gene>
    <name type="primary">RL2</name>
    <name type="synonym">MEE3</name>
    <name type="synonym">RMS1</name>
    <name type="ordered locus">At2g21650</name>
    <name type="ORF">F2G1.8</name>
</gene>
<proteinExistence type="evidence at transcript level"/>
<evidence type="ECO:0000250" key="1"/>
<evidence type="ECO:0000256" key="2">
    <source>
        <dbReference type="SAM" id="MobiDB-lite"/>
    </source>
</evidence>
<evidence type="ECO:0000269" key="3">
    <source>
    </source>
</evidence>
<evidence type="ECO:0000269" key="4">
    <source>
    </source>
</evidence>
<evidence type="ECO:0000305" key="5">
    <source>
    </source>
</evidence>
<dbReference type="EMBL" id="AY519526">
    <property type="protein sequence ID" value="AAS09996.1"/>
    <property type="molecule type" value="mRNA"/>
</dbReference>
<dbReference type="EMBL" id="AC007119">
    <property type="protein sequence ID" value="AAD23640.1"/>
    <property type="molecule type" value="Genomic_DNA"/>
</dbReference>
<dbReference type="EMBL" id="CP002685">
    <property type="protein sequence ID" value="AEC07207.1"/>
    <property type="molecule type" value="Genomic_DNA"/>
</dbReference>
<dbReference type="EMBL" id="BT008554">
    <property type="protein sequence ID" value="AAP40381.1"/>
    <property type="molecule type" value="mRNA"/>
</dbReference>
<dbReference type="EMBL" id="BT008698">
    <property type="protein sequence ID" value="AAP40504.1"/>
    <property type="molecule type" value="mRNA"/>
</dbReference>
<dbReference type="EMBL" id="AK229516">
    <property type="protein sequence ID" value="BAF01371.1"/>
    <property type="molecule type" value="mRNA"/>
</dbReference>
<dbReference type="PIR" id="G84603">
    <property type="entry name" value="G84603"/>
</dbReference>
<dbReference type="RefSeq" id="NP_179759.1">
    <property type="nucleotide sequence ID" value="NM_127736.4"/>
</dbReference>
<dbReference type="SMR" id="Q9SIJ5"/>
<dbReference type="BioGRID" id="2056">
    <property type="interactions" value="8"/>
</dbReference>
<dbReference type="FunCoup" id="Q9SIJ5">
    <property type="interactions" value="49"/>
</dbReference>
<dbReference type="IntAct" id="Q9SIJ5">
    <property type="interactions" value="5"/>
</dbReference>
<dbReference type="STRING" id="3702.Q9SIJ5"/>
<dbReference type="PaxDb" id="3702-AT2G21650.1"/>
<dbReference type="ProteomicsDB" id="236563"/>
<dbReference type="EnsemblPlants" id="AT2G21650.1">
    <property type="protein sequence ID" value="AT2G21650.1"/>
    <property type="gene ID" value="AT2G21650"/>
</dbReference>
<dbReference type="GeneID" id="816703"/>
<dbReference type="Gramene" id="AT2G21650.1">
    <property type="protein sequence ID" value="AT2G21650.1"/>
    <property type="gene ID" value="AT2G21650"/>
</dbReference>
<dbReference type="KEGG" id="ath:AT2G21650"/>
<dbReference type="Araport" id="AT2G21650"/>
<dbReference type="TAIR" id="AT2G21650">
    <property type="gene designation" value="MEE3"/>
</dbReference>
<dbReference type="eggNOG" id="KOG0724">
    <property type="taxonomic scope" value="Eukaryota"/>
</dbReference>
<dbReference type="HOGENOM" id="CLU_137624_1_2_1"/>
<dbReference type="InParanoid" id="Q9SIJ5"/>
<dbReference type="OMA" id="KRIEHGQ"/>
<dbReference type="OrthoDB" id="118550at2759"/>
<dbReference type="PhylomeDB" id="Q9SIJ5"/>
<dbReference type="PRO" id="PR:Q9SIJ5"/>
<dbReference type="Proteomes" id="UP000006548">
    <property type="component" value="Chromosome 2"/>
</dbReference>
<dbReference type="ExpressionAtlas" id="Q9SIJ5">
    <property type="expression patterns" value="baseline and differential"/>
</dbReference>
<dbReference type="GO" id="GO:0005634">
    <property type="term" value="C:nucleus"/>
    <property type="evidence" value="ECO:0007669"/>
    <property type="project" value="UniProtKB-SubCell"/>
</dbReference>
<dbReference type="GO" id="GO:0003700">
    <property type="term" value="F:DNA-binding transcription factor activity"/>
    <property type="evidence" value="ECO:0000250"/>
    <property type="project" value="TAIR"/>
</dbReference>
<dbReference type="GO" id="GO:0009793">
    <property type="term" value="P:embryo development ending in seed dormancy"/>
    <property type="evidence" value="ECO:0000315"/>
    <property type="project" value="TAIR"/>
</dbReference>
<dbReference type="GO" id="GO:0009630">
    <property type="term" value="P:gravitropism"/>
    <property type="evidence" value="ECO:0000315"/>
    <property type="project" value="TAIR"/>
</dbReference>
<dbReference type="GO" id="GO:0010114">
    <property type="term" value="P:response to red light"/>
    <property type="evidence" value="ECO:0000315"/>
    <property type="project" value="TAIR"/>
</dbReference>
<dbReference type="CDD" id="cd00167">
    <property type="entry name" value="SANT"/>
    <property type="match status" value="1"/>
</dbReference>
<dbReference type="FunFam" id="1.10.10.60:FF:000154">
    <property type="entry name" value="Transcription factor SRM1"/>
    <property type="match status" value="1"/>
</dbReference>
<dbReference type="Gene3D" id="1.10.10.60">
    <property type="entry name" value="Homeodomain-like"/>
    <property type="match status" value="1"/>
</dbReference>
<dbReference type="InterPro" id="IPR009057">
    <property type="entry name" value="Homeodomain-like_sf"/>
</dbReference>
<dbReference type="InterPro" id="IPR044636">
    <property type="entry name" value="RADIALIS-like"/>
</dbReference>
<dbReference type="InterPro" id="IPR001005">
    <property type="entry name" value="SANT/Myb"/>
</dbReference>
<dbReference type="PANTHER" id="PTHR43952">
    <property type="entry name" value="MYB FAMILY TRANSCRIPTION FACTOR-RELATED"/>
    <property type="match status" value="1"/>
</dbReference>
<dbReference type="PANTHER" id="PTHR43952:SF71">
    <property type="entry name" value="PROTEIN RADIALIS-LIKE 2"/>
    <property type="match status" value="1"/>
</dbReference>
<dbReference type="SMART" id="SM00717">
    <property type="entry name" value="SANT"/>
    <property type="match status" value="1"/>
</dbReference>
<dbReference type="SUPFAM" id="SSF46689">
    <property type="entry name" value="Homeodomain-like"/>
    <property type="match status" value="1"/>
</dbReference>
<feature type="chain" id="PRO_0000419442" description="Protein RADIALIS-like 2">
    <location>
        <begin position="1"/>
        <end position="101"/>
    </location>
</feature>
<feature type="domain" description="SANT">
    <location>
        <begin position="9"/>
        <end position="64"/>
    </location>
</feature>
<feature type="region of interest" description="Disordered" evidence="2">
    <location>
        <begin position="69"/>
        <end position="101"/>
    </location>
</feature>
<reference key="1">
    <citation type="submission" date="2004-01" db="EMBL/GenBank/DDBJ databases">
        <title>The MYB transcription factor family in Arabidopsis: a genome-wide cloning and expression pattern analysis.</title>
        <authorList>
            <person name="Qu L.-J."/>
            <person name="Gu H."/>
        </authorList>
    </citation>
    <scope>NUCLEOTIDE SEQUENCE [LARGE SCALE MRNA]</scope>
</reference>
<reference key="2">
    <citation type="journal article" date="1999" name="Nature">
        <title>Sequence and analysis of chromosome 2 of the plant Arabidopsis thaliana.</title>
        <authorList>
            <person name="Lin X."/>
            <person name="Kaul S."/>
            <person name="Rounsley S.D."/>
            <person name="Shea T.P."/>
            <person name="Benito M.-I."/>
            <person name="Town C.D."/>
            <person name="Fujii C.Y."/>
            <person name="Mason T.M."/>
            <person name="Bowman C.L."/>
            <person name="Barnstead M.E."/>
            <person name="Feldblyum T.V."/>
            <person name="Buell C.R."/>
            <person name="Ketchum K.A."/>
            <person name="Lee J.J."/>
            <person name="Ronning C.M."/>
            <person name="Koo H.L."/>
            <person name="Moffat K.S."/>
            <person name="Cronin L.A."/>
            <person name="Shen M."/>
            <person name="Pai G."/>
            <person name="Van Aken S."/>
            <person name="Umayam L."/>
            <person name="Tallon L.J."/>
            <person name="Gill J.E."/>
            <person name="Adams M.D."/>
            <person name="Carrera A.J."/>
            <person name="Creasy T.H."/>
            <person name="Goodman H.M."/>
            <person name="Somerville C.R."/>
            <person name="Copenhaver G.P."/>
            <person name="Preuss D."/>
            <person name="Nierman W.C."/>
            <person name="White O."/>
            <person name="Eisen J.A."/>
            <person name="Salzberg S.L."/>
            <person name="Fraser C.M."/>
            <person name="Venter J.C."/>
        </authorList>
    </citation>
    <scope>NUCLEOTIDE SEQUENCE [LARGE SCALE GENOMIC DNA]</scope>
    <source>
        <strain>cv. Columbia</strain>
    </source>
</reference>
<reference key="3">
    <citation type="journal article" date="2017" name="Plant J.">
        <title>Araport11: a complete reannotation of the Arabidopsis thaliana reference genome.</title>
        <authorList>
            <person name="Cheng C.Y."/>
            <person name="Krishnakumar V."/>
            <person name="Chan A.P."/>
            <person name="Thibaud-Nissen F."/>
            <person name="Schobel S."/>
            <person name="Town C.D."/>
        </authorList>
    </citation>
    <scope>GENOME REANNOTATION</scope>
    <source>
        <strain>cv. Columbia</strain>
    </source>
</reference>
<reference key="4">
    <citation type="journal article" date="2003" name="Science">
        <title>Empirical analysis of transcriptional activity in the Arabidopsis genome.</title>
        <authorList>
            <person name="Yamada K."/>
            <person name="Lim J."/>
            <person name="Dale J.M."/>
            <person name="Chen H."/>
            <person name="Shinn P."/>
            <person name="Palm C.J."/>
            <person name="Southwick A.M."/>
            <person name="Wu H.C."/>
            <person name="Kim C.J."/>
            <person name="Nguyen M."/>
            <person name="Pham P.K."/>
            <person name="Cheuk R.F."/>
            <person name="Karlin-Newmann G."/>
            <person name="Liu S.X."/>
            <person name="Lam B."/>
            <person name="Sakano H."/>
            <person name="Wu T."/>
            <person name="Yu G."/>
            <person name="Miranda M."/>
            <person name="Quach H.L."/>
            <person name="Tripp M."/>
            <person name="Chang C.H."/>
            <person name="Lee J.M."/>
            <person name="Toriumi M.J."/>
            <person name="Chan M.M."/>
            <person name="Tang C.C."/>
            <person name="Onodera C.S."/>
            <person name="Deng J.M."/>
            <person name="Akiyama K."/>
            <person name="Ansari Y."/>
            <person name="Arakawa T."/>
            <person name="Banh J."/>
            <person name="Banno F."/>
            <person name="Bowser L."/>
            <person name="Brooks S.Y."/>
            <person name="Carninci P."/>
            <person name="Chao Q."/>
            <person name="Choy N."/>
            <person name="Enju A."/>
            <person name="Goldsmith A.D."/>
            <person name="Gurjal M."/>
            <person name="Hansen N.F."/>
            <person name="Hayashizaki Y."/>
            <person name="Johnson-Hopson C."/>
            <person name="Hsuan V.W."/>
            <person name="Iida K."/>
            <person name="Karnes M."/>
            <person name="Khan S."/>
            <person name="Koesema E."/>
            <person name="Ishida J."/>
            <person name="Jiang P.X."/>
            <person name="Jones T."/>
            <person name="Kawai J."/>
            <person name="Kamiya A."/>
            <person name="Meyers C."/>
            <person name="Nakajima M."/>
            <person name="Narusaka M."/>
            <person name="Seki M."/>
            <person name="Sakurai T."/>
            <person name="Satou M."/>
            <person name="Tamse R."/>
            <person name="Vaysberg M."/>
            <person name="Wallender E.K."/>
            <person name="Wong C."/>
            <person name="Yamamura Y."/>
            <person name="Yuan S."/>
            <person name="Shinozaki K."/>
            <person name="Davis R.W."/>
            <person name="Theologis A."/>
            <person name="Ecker J.R."/>
        </authorList>
    </citation>
    <scope>NUCLEOTIDE SEQUENCE [LARGE SCALE MRNA]</scope>
    <source>
        <strain>cv. Columbia</strain>
    </source>
</reference>
<reference key="5">
    <citation type="submission" date="2006-07" db="EMBL/GenBank/DDBJ databases">
        <title>Large-scale analysis of RIKEN Arabidopsis full-length (RAFL) cDNAs.</title>
        <authorList>
            <person name="Totoki Y."/>
            <person name="Seki M."/>
            <person name="Ishida J."/>
            <person name="Nakajima M."/>
            <person name="Enju A."/>
            <person name="Kamiya A."/>
            <person name="Narusaka M."/>
            <person name="Shin-i T."/>
            <person name="Nakagawa M."/>
            <person name="Sakamoto N."/>
            <person name="Oishi K."/>
            <person name="Kohara Y."/>
            <person name="Kobayashi M."/>
            <person name="Toyoda A."/>
            <person name="Sakaki Y."/>
            <person name="Sakurai T."/>
            <person name="Iida K."/>
            <person name="Akiyama K."/>
            <person name="Satou M."/>
            <person name="Toyoda T."/>
            <person name="Konagaya A."/>
            <person name="Carninci P."/>
            <person name="Kawai J."/>
            <person name="Hayashizaki Y."/>
            <person name="Shinozaki K."/>
        </authorList>
    </citation>
    <scope>NUCLEOTIDE SEQUENCE [LARGE SCALE MRNA]</scope>
    <source>
        <strain>cv. Columbia</strain>
    </source>
</reference>
<reference key="6">
    <citation type="journal article" date="2005" name="Development">
        <title>Genetic and molecular identification of genes required for female gametophyte development and function in Arabidopsis.</title>
        <authorList>
            <person name="Pagnussat G.C."/>
            <person name="Yu H.-J."/>
            <person name="Ngo Q.A."/>
            <person name="Rajani S."/>
            <person name="Mayalagu S."/>
            <person name="Johnson C.S."/>
            <person name="Capron A."/>
            <person name="Xie L.-F."/>
            <person name="Ye D."/>
            <person name="Sundaresan V."/>
        </authorList>
    </citation>
    <scope>FUNCTION</scope>
    <scope>DISRUPTION PHENOTYPE</scope>
</reference>
<reference key="7">
    <citation type="journal article" date="2006" name="Plant Mol. Biol.">
        <title>The MYB transcription factor superfamily of Arabidopsis: expression analysis and phylogenetic comparison with the rice MYB family.</title>
        <authorList>
            <person name="Chen Y."/>
            <person name="Yang X."/>
            <person name="He K."/>
            <person name="Liu M."/>
            <person name="Li J."/>
            <person name="Gao Z."/>
            <person name="Lin Z."/>
            <person name="Zhang Y."/>
            <person name="Wang X."/>
            <person name="Qiu X."/>
            <person name="Shen Y."/>
            <person name="Zhang L."/>
            <person name="Deng X."/>
            <person name="Luo J."/>
            <person name="Deng X.-W."/>
            <person name="Chen Z."/>
            <person name="Gu H."/>
            <person name="Qu L.-J."/>
        </authorList>
    </citation>
    <scope>GENE FAMILY</scope>
</reference>
<reference key="8">
    <citation type="journal article" date="2007" name="Plant J.">
        <title>Diversification and co-option of RAD-like genes in the evolution of floral asymmetry.</title>
        <authorList>
            <person name="Baxter C.E.L."/>
            <person name="Costa M.M.R."/>
            <person name="Coen E.S."/>
        </authorList>
    </citation>
    <scope>GENE FAMILY</scope>
    <scope>TISSUE SPECIFICITY</scope>
</reference>
<reference key="9">
    <citation type="journal article" date="2008" name="Biosci. Biotechnol. Biochem.">
        <title>A small subfamily of Arabidopsis RADIALIS-LIKE SANT/MYB genes: a link to HOOKLESS1-mediated signal transduction during early morphogenesis.</title>
        <authorList>
            <person name="Hamaguchi A."/>
            <person name="Yamashino T."/>
            <person name="Koizumi N."/>
            <person name="Kiba T."/>
            <person name="Kojima M."/>
            <person name="Sakakibara H."/>
            <person name="Mizuno T."/>
        </authorList>
    </citation>
    <scope>GENE FAMILY</scope>
</reference>
<organism>
    <name type="scientific">Arabidopsis thaliana</name>
    <name type="common">Mouse-ear cress</name>
    <dbReference type="NCBI Taxonomy" id="3702"/>
    <lineage>
        <taxon>Eukaryota</taxon>
        <taxon>Viridiplantae</taxon>
        <taxon>Streptophyta</taxon>
        <taxon>Embryophyta</taxon>
        <taxon>Tracheophyta</taxon>
        <taxon>Spermatophyta</taxon>
        <taxon>Magnoliopsida</taxon>
        <taxon>eudicotyledons</taxon>
        <taxon>Gunneridae</taxon>
        <taxon>Pentapetalae</taxon>
        <taxon>rosids</taxon>
        <taxon>malvids</taxon>
        <taxon>Brassicales</taxon>
        <taxon>Brassicaceae</taxon>
        <taxon>Camelineae</taxon>
        <taxon>Arabidopsis</taxon>
    </lineage>
</organism>
<comment type="function">
    <text evidence="3">Probable transcription factor. Required for female gametophyte development.</text>
</comment>
<comment type="subcellular location">
    <subcellularLocation>
        <location evidence="1">Nucleus</location>
    </subcellularLocation>
</comment>
<comment type="tissue specificity">
    <text evidence="4">Expressed in the funiculus of ovules and in embryos. In young ovules, expression is observed in the adaxial side of the funiculus (the stalk connecting the embryo sac to the placenta). Also expressed in heart-stage embryos, in the cortex and endodermis of the hypocotyl region but not in the cotyledons, shoot and root apical meristems, provasculature or epidermis. Not detected in young seedlings, mature roots or in young floral primordia.</text>
</comment>
<comment type="disruption phenotype">
    <text evidence="3">Endosperm development arrested.</text>
</comment>
<comment type="miscellaneous">
    <text evidence="5">Assigned as a member of the MYB-related gene family, I-box-binding-like subfamily.</text>
</comment>
<keyword id="KW-0539">Nucleus</keyword>
<keyword id="KW-1185">Reference proteome</keyword>
<keyword id="KW-0804">Transcription</keyword>
<keyword id="KW-0805">Transcription regulation</keyword>
<name>RADL2_ARATH</name>
<accession>Q9SIJ5</accession>
<protein>
    <recommendedName>
        <fullName>Protein RADIALIS-like 2</fullName>
        <shortName>AtRL2</shortName>
        <shortName>Protein RAD-like 2</shortName>
    </recommendedName>
    <alternativeName>
        <fullName>Protein MATERNAL EFFECT EMBRYO ARREST 3</fullName>
    </alternativeName>
    <alternativeName>
        <fullName>Protein RADIALIS-LIKE SANT/MYB 1</fullName>
        <shortName>Protein RSM1</shortName>
    </alternativeName>
</protein>
<sequence length="101" mass="11508">MASGSMSSYGSGSWTVKQNKAFERALAVYDQDTPDRWHNVARAVGGKTPEEAKRQYDLLVRDIESIENGHVPFPDYKTTTGNSNRGRLRDEEKRMRSMKLQ</sequence>